<evidence type="ECO:0000256" key="1">
    <source>
        <dbReference type="SAM" id="MobiDB-lite"/>
    </source>
</evidence>
<evidence type="ECO:0000269" key="2">
    <source>
    </source>
</evidence>
<organism>
    <name type="scientific">Escherichia coli (strain K12)</name>
    <dbReference type="NCBI Taxonomy" id="83333"/>
    <lineage>
        <taxon>Bacteria</taxon>
        <taxon>Pseudomonadati</taxon>
        <taxon>Pseudomonadota</taxon>
        <taxon>Gammaproteobacteria</taxon>
        <taxon>Enterobacterales</taxon>
        <taxon>Enterobacteriaceae</taxon>
        <taxon>Escherichia</taxon>
    </lineage>
</organism>
<keyword id="KW-0903">Direct protein sequencing</keyword>
<keyword id="KW-1185">Reference proteome</keyword>
<keyword id="KW-0732">Signal</keyword>
<sequence length="101" mass="10477">MKLSTCCAALLLALASPAVLAAPGSCERIQSDISQRIINNGVPESSFTLSIVPNDQVDQPDSQVVGHCANDTHKILYTRTTSGNVSAPAQSSQDGAPAEPQ</sequence>
<gene>
    <name type="primary">ynfD</name>
    <name type="ordered locus">b1586</name>
    <name type="ordered locus">JW5259</name>
</gene>
<proteinExistence type="evidence at protein level"/>
<accession>P76172</accession>
<accession>Q2MB77</accession>
<dbReference type="EMBL" id="U00096">
    <property type="protein sequence ID" value="AAC74658.2"/>
    <property type="molecule type" value="Genomic_DNA"/>
</dbReference>
<dbReference type="EMBL" id="AP009048">
    <property type="protein sequence ID" value="BAE76479.1"/>
    <property type="molecule type" value="Genomic_DNA"/>
</dbReference>
<dbReference type="PIR" id="D64914">
    <property type="entry name" value="D64914"/>
</dbReference>
<dbReference type="RefSeq" id="NP_416103.2">
    <property type="nucleotide sequence ID" value="NC_000913.3"/>
</dbReference>
<dbReference type="RefSeq" id="WP_001300836.1">
    <property type="nucleotide sequence ID" value="NZ_SSZK01000001.1"/>
</dbReference>
<dbReference type="BioGRID" id="4261514">
    <property type="interactions" value="5"/>
</dbReference>
<dbReference type="DIP" id="DIP-12764N"/>
<dbReference type="FunCoup" id="P76172">
    <property type="interactions" value="53"/>
</dbReference>
<dbReference type="IntAct" id="P76172">
    <property type="interactions" value="1"/>
</dbReference>
<dbReference type="STRING" id="511145.b1586"/>
<dbReference type="jPOST" id="P76172"/>
<dbReference type="PaxDb" id="511145-b1586"/>
<dbReference type="EnsemblBacteria" id="AAC74658">
    <property type="protein sequence ID" value="AAC74658"/>
    <property type="gene ID" value="b1586"/>
</dbReference>
<dbReference type="GeneID" id="946133"/>
<dbReference type="KEGG" id="ecj:JW5259"/>
<dbReference type="KEGG" id="eco:b1586"/>
<dbReference type="KEGG" id="ecoc:C3026_09140"/>
<dbReference type="PATRIC" id="fig|511145.12.peg.1657"/>
<dbReference type="EchoBASE" id="EB3603"/>
<dbReference type="eggNOG" id="ENOG5032STG">
    <property type="taxonomic scope" value="Bacteria"/>
</dbReference>
<dbReference type="HOGENOM" id="CLU_155120_0_0_6"/>
<dbReference type="InParanoid" id="P76172"/>
<dbReference type="OMA" id="CANDTFK"/>
<dbReference type="OrthoDB" id="6183281at2"/>
<dbReference type="PhylomeDB" id="P76172"/>
<dbReference type="BioCyc" id="EcoCyc:G6844-MONOMER"/>
<dbReference type="PRO" id="PR:P76172"/>
<dbReference type="Proteomes" id="UP000000625">
    <property type="component" value="Chromosome"/>
</dbReference>
<dbReference type="InterPro" id="IPR010595">
    <property type="entry name" value="DUF1161"/>
</dbReference>
<dbReference type="Pfam" id="PF06649">
    <property type="entry name" value="DUF1161"/>
    <property type="match status" value="1"/>
</dbReference>
<protein>
    <recommendedName>
        <fullName>Uncharacterized protein YnfD</fullName>
    </recommendedName>
</protein>
<name>YNFD_ECOLI</name>
<reference key="1">
    <citation type="journal article" date="1997" name="Science">
        <title>The complete genome sequence of Escherichia coli K-12.</title>
        <authorList>
            <person name="Blattner F.R."/>
            <person name="Plunkett G. III"/>
            <person name="Bloch C.A."/>
            <person name="Perna N.T."/>
            <person name="Burland V."/>
            <person name="Riley M."/>
            <person name="Collado-Vides J."/>
            <person name="Glasner J.D."/>
            <person name="Rode C.K."/>
            <person name="Mayhew G.F."/>
            <person name="Gregor J."/>
            <person name="Davis N.W."/>
            <person name="Kirkpatrick H.A."/>
            <person name="Goeden M.A."/>
            <person name="Rose D.J."/>
            <person name="Mau B."/>
            <person name="Shao Y."/>
        </authorList>
    </citation>
    <scope>NUCLEOTIDE SEQUENCE [LARGE SCALE GENOMIC DNA]</scope>
    <source>
        <strain>K12 / MG1655 / ATCC 47076</strain>
    </source>
</reference>
<reference key="2">
    <citation type="journal article" date="2006" name="Mol. Syst. Biol.">
        <title>Highly accurate genome sequences of Escherichia coli K-12 strains MG1655 and W3110.</title>
        <authorList>
            <person name="Hayashi K."/>
            <person name="Morooka N."/>
            <person name="Yamamoto Y."/>
            <person name="Fujita K."/>
            <person name="Isono K."/>
            <person name="Choi S."/>
            <person name="Ohtsubo E."/>
            <person name="Baba T."/>
            <person name="Wanner B.L."/>
            <person name="Mori H."/>
            <person name="Horiuchi T."/>
        </authorList>
    </citation>
    <scope>NUCLEOTIDE SEQUENCE [LARGE SCALE GENOMIC DNA]</scope>
    <source>
        <strain>K12 / W3110 / ATCC 27325 / DSM 5911</strain>
    </source>
</reference>
<reference key="3">
    <citation type="journal article" date="1998" name="FEMS Microbiol. Lett.">
        <title>Small genes/gene-products in Escherichia coli K-12.</title>
        <authorList>
            <person name="Wasinger V.C."/>
            <person name="Humphery-Smith I."/>
        </authorList>
    </citation>
    <scope>PROTEIN SEQUENCE OF 22-33</scope>
</reference>
<feature type="signal peptide" evidence="2">
    <location>
        <begin position="1"/>
        <end position="21"/>
    </location>
</feature>
<feature type="chain" id="PRO_0000013849" description="Uncharacterized protein YnfD">
    <location>
        <begin position="22"/>
        <end position="101"/>
    </location>
</feature>
<feature type="region of interest" description="Disordered" evidence="1">
    <location>
        <begin position="79"/>
        <end position="101"/>
    </location>
</feature>
<feature type="compositionally biased region" description="Polar residues" evidence="1">
    <location>
        <begin position="79"/>
        <end position="94"/>
    </location>
</feature>